<reference key="1">
    <citation type="journal article" date="1994" name="Insect Mol. Biol.">
        <title>A cDNA encoding an ADP/ATP carrier from the mosquito Anopheles gambiae.</title>
        <authorList>
            <person name="Beard C.B."/>
            <person name="Crews-Oyen A.E."/>
            <person name="Kumar V.K."/>
            <person name="Collins F.H."/>
        </authorList>
    </citation>
    <scope>NUCLEOTIDE SEQUENCE [MRNA]</scope>
    <source>
        <strain>G3</strain>
    </source>
</reference>
<reference key="2">
    <citation type="submission" date="2005-07" db="EMBL/GenBank/DDBJ databases">
        <title>Anopheles gambiae ADP/ATP carrier protein mRNA.</title>
        <authorList>
            <person name="Niu B."/>
            <person name="Weng H."/>
            <person name="Meng Z."/>
        </authorList>
    </citation>
    <scope>NUCLEOTIDE SEQUENCE [MRNA]</scope>
</reference>
<reference key="3">
    <citation type="journal article" date="2002" name="Science">
        <title>The genome sequence of the malaria mosquito Anopheles gambiae.</title>
        <authorList>
            <person name="Holt R.A."/>
            <person name="Subramanian G.M."/>
            <person name="Halpern A."/>
            <person name="Sutton G.G."/>
            <person name="Charlab R."/>
            <person name="Nusskern D.R."/>
            <person name="Wincker P."/>
            <person name="Clark A.G."/>
            <person name="Ribeiro J.M.C."/>
            <person name="Wides R."/>
            <person name="Salzberg S.L."/>
            <person name="Loftus B.J."/>
            <person name="Yandell M.D."/>
            <person name="Majoros W.H."/>
            <person name="Rusch D.B."/>
            <person name="Lai Z."/>
            <person name="Kraft C.L."/>
            <person name="Abril J.F."/>
            <person name="Anthouard V."/>
            <person name="Arensburger P."/>
            <person name="Atkinson P.W."/>
            <person name="Baden H."/>
            <person name="de Berardinis V."/>
            <person name="Baldwin D."/>
            <person name="Benes V."/>
            <person name="Biedler J."/>
            <person name="Blass C."/>
            <person name="Bolanos R."/>
            <person name="Boscus D."/>
            <person name="Barnstead M."/>
            <person name="Cai S."/>
            <person name="Center A."/>
            <person name="Chaturverdi K."/>
            <person name="Christophides G.K."/>
            <person name="Chrystal M.A.M."/>
            <person name="Clamp M."/>
            <person name="Cravchik A."/>
            <person name="Curwen V."/>
            <person name="Dana A."/>
            <person name="Delcher A."/>
            <person name="Dew I."/>
            <person name="Evans C.A."/>
            <person name="Flanigan M."/>
            <person name="Grundschober-Freimoser A."/>
            <person name="Friedli L."/>
            <person name="Gu Z."/>
            <person name="Guan P."/>
            <person name="Guigo R."/>
            <person name="Hillenmeyer M.E."/>
            <person name="Hladun S.L."/>
            <person name="Hogan J.R."/>
            <person name="Hong Y.S."/>
            <person name="Hoover J."/>
            <person name="Jaillon O."/>
            <person name="Ke Z."/>
            <person name="Kodira C.D."/>
            <person name="Kokoza E."/>
            <person name="Koutsos A."/>
            <person name="Letunic I."/>
            <person name="Levitsky A.A."/>
            <person name="Liang Y."/>
            <person name="Lin J.-J."/>
            <person name="Lobo N.F."/>
            <person name="Lopez J.R."/>
            <person name="Malek J.A."/>
            <person name="McIntosh T.C."/>
            <person name="Meister S."/>
            <person name="Miller J.R."/>
            <person name="Mobarry C."/>
            <person name="Mongin E."/>
            <person name="Murphy S.D."/>
            <person name="O'Brochta D.A."/>
            <person name="Pfannkoch C."/>
            <person name="Qi R."/>
            <person name="Regier M.A."/>
            <person name="Remington K."/>
            <person name="Shao H."/>
            <person name="Sharakhova M.V."/>
            <person name="Sitter C.D."/>
            <person name="Shetty J."/>
            <person name="Smith T.J."/>
            <person name="Strong R."/>
            <person name="Sun J."/>
            <person name="Thomasova D."/>
            <person name="Ton L.Q."/>
            <person name="Topalis P."/>
            <person name="Tu Z.J."/>
            <person name="Unger M.F."/>
            <person name="Walenz B."/>
            <person name="Wang A.H."/>
            <person name="Wang J."/>
            <person name="Wang M."/>
            <person name="Wang X."/>
            <person name="Woodford K.J."/>
            <person name="Wortman J.R."/>
            <person name="Wu M."/>
            <person name="Yao A."/>
            <person name="Zdobnov E.M."/>
            <person name="Zhang H."/>
            <person name="Zhao Q."/>
            <person name="Zhao S."/>
            <person name="Zhu S.C."/>
            <person name="Zhimulev I."/>
            <person name="Coluzzi M."/>
            <person name="della Torre A."/>
            <person name="Roth C.W."/>
            <person name="Louis C."/>
            <person name="Kalush F."/>
            <person name="Mural R.J."/>
            <person name="Myers E.W."/>
            <person name="Adams M.D."/>
            <person name="Smith H.O."/>
            <person name="Broder S."/>
            <person name="Gardner M.J."/>
            <person name="Fraser C.M."/>
            <person name="Birney E."/>
            <person name="Bork P."/>
            <person name="Brey P.T."/>
            <person name="Venter J.C."/>
            <person name="Weissenbach J."/>
            <person name="Kafatos F.C."/>
            <person name="Collins F.H."/>
            <person name="Hoffman S.L."/>
        </authorList>
    </citation>
    <scope>NUCLEOTIDE SEQUENCE [LARGE SCALE GENOMIC DNA]</scope>
    <source>
        <strain>PEST</strain>
    </source>
</reference>
<feature type="chain" id="PRO_0000090586" description="ADP,ATP carrier protein 1">
    <location>
        <begin position="1"/>
        <end position="301"/>
    </location>
</feature>
<feature type="transmembrane region" description="Helical; Name=1" evidence="2">
    <location>
        <begin position="10"/>
        <end position="39"/>
    </location>
</feature>
<feature type="transmembrane region" description="Helical; Name=2" evidence="2">
    <location>
        <begin position="77"/>
        <end position="101"/>
    </location>
</feature>
<feature type="transmembrane region" description="Helical; Name=3" evidence="2">
    <location>
        <begin position="112"/>
        <end position="132"/>
    </location>
</feature>
<feature type="transmembrane region" description="Helical; Name=4" evidence="2">
    <location>
        <begin position="181"/>
        <end position="201"/>
    </location>
</feature>
<feature type="transmembrane region" description="Helical; Name=5" evidence="2">
    <location>
        <begin position="213"/>
        <end position="233"/>
    </location>
</feature>
<feature type="transmembrane region" description="Helical; Name=6" evidence="2">
    <location>
        <begin position="276"/>
        <end position="293"/>
    </location>
</feature>
<feature type="repeat" description="Solcar 1">
    <location>
        <begin position="8"/>
        <end position="100"/>
    </location>
</feature>
<feature type="repeat" description="Solcar 2">
    <location>
        <begin position="113"/>
        <end position="203"/>
    </location>
</feature>
<feature type="repeat" description="Solcar 3">
    <location>
        <begin position="210"/>
        <end position="299"/>
    </location>
</feature>
<feature type="region of interest" description="Important for transport activity" evidence="3">
    <location>
        <begin position="237"/>
        <end position="242"/>
    </location>
</feature>
<feature type="short sequence motif" description="Nucleotide carrier signature motif" evidence="2">
    <location>
        <begin position="237"/>
        <end position="242"/>
    </location>
</feature>
<feature type="binding site" evidence="2">
    <location>
        <position position="82"/>
    </location>
    <ligand>
        <name>ADP</name>
        <dbReference type="ChEBI" id="CHEBI:456216"/>
    </ligand>
</feature>
<feature type="binding site" evidence="2">
    <location>
        <position position="94"/>
    </location>
    <ligand>
        <name>ADP</name>
        <dbReference type="ChEBI" id="CHEBI:456216"/>
    </ligand>
</feature>
<feature type="binding site" evidence="2">
    <location>
        <position position="237"/>
    </location>
    <ligand>
        <name>ADP</name>
        <dbReference type="ChEBI" id="CHEBI:456216"/>
    </ligand>
</feature>
<feature type="sequence conflict" description="In Ref. 3; EAA04717." evidence="7" ref="3">
    <original>K</original>
    <variation>Q</variation>
    <location>
        <position position="51"/>
    </location>
</feature>
<feature type="sequence conflict" description="In Ref. 1; AAB04104/AAB04105." evidence="7" ref="1">
    <original>R</original>
    <variation>P</variation>
    <location>
        <position position="149"/>
    </location>
</feature>
<feature type="sequence conflict" description="In Ref. 1; AAB04104/AAB04105." evidence="7" ref="1">
    <original>GRA</original>
    <variation>WPC</variation>
    <location>
        <begin position="245"/>
        <end position="247"/>
    </location>
</feature>
<feature type="sequence conflict" description="In Ref. 3; EAA04717." evidence="7" ref="3">
    <original>G</original>
    <variation>A</variation>
    <location>
        <position position="264"/>
    </location>
</feature>
<accession>Q27238</accession>
<accession>Q7QIC6</accession>
<accession>Q86PG1</accession>
<comment type="function">
    <text evidence="1 4">ADP:ATP antiporter that mediates import of ADP into the mitochondrial matrix for ATP synthesis, and export of ATP out to fuel the cell (By similarity). Cycles between the cytoplasmic-open state (c-state) and the matrix-open state (m-state): operates by the alternating access mechanism with a single substrate-binding site intermittently exposed to either the cytosolic (c-state) or matrix (m-state) side of the inner mitochondrial membrane (By similarity).</text>
</comment>
<comment type="catalytic activity">
    <reaction evidence="4">
        <text>ADP(in) + ATP(out) = ADP(out) + ATP(in)</text>
        <dbReference type="Rhea" id="RHEA:34999"/>
        <dbReference type="ChEBI" id="CHEBI:30616"/>
        <dbReference type="ChEBI" id="CHEBI:456216"/>
    </reaction>
    <physiologicalReaction direction="left-to-right" evidence="4">
        <dbReference type="Rhea" id="RHEA:35000"/>
    </physiologicalReaction>
</comment>
<comment type="activity regulation">
    <text evidence="1">The matrix-open state (m-state) is inhibited by the membrane-permeable bongkrekic acid (BKA). The cytoplasmic-open state (c-state) is inhibited by the membrane-impermeable toxic inhibitor carboxyatractyloside (CATR).</text>
</comment>
<comment type="subunit">
    <text evidence="1 2">Monomer.</text>
</comment>
<comment type="subcellular location">
    <subcellularLocation>
        <location evidence="5">Mitochondrion inner membrane</location>
        <topology evidence="6">Multi-pass membrane protein</topology>
    </subcellularLocation>
</comment>
<comment type="domain">
    <text evidence="2">The transmembrane helices are not perpendicular to the plane of the membrane, but cross the membrane at an angle. Odd-numbered transmembrane helices exhibit a sharp kink, due to the presence of a conserved proline residue.</text>
</comment>
<comment type="similarity">
    <text evidence="7">Belongs to the mitochondrial carrier (TC 2.A.29) family.</text>
</comment>
<name>ADT1_ANOGA</name>
<proteinExistence type="evidence at transcript level"/>
<protein>
    <recommendedName>
        <fullName>ADP,ATP carrier protein 1</fullName>
    </recommendedName>
    <alternativeName>
        <fullName>ADP/ATP translocase 1</fullName>
    </alternativeName>
    <alternativeName>
        <fullName>Adenine nucleotide translocator 1</fullName>
        <shortName>ANT 1</shortName>
    </alternativeName>
</protein>
<organism>
    <name type="scientific">Anopheles gambiae</name>
    <name type="common">African malaria mosquito</name>
    <dbReference type="NCBI Taxonomy" id="7165"/>
    <lineage>
        <taxon>Eukaryota</taxon>
        <taxon>Metazoa</taxon>
        <taxon>Ecdysozoa</taxon>
        <taxon>Arthropoda</taxon>
        <taxon>Hexapoda</taxon>
        <taxon>Insecta</taxon>
        <taxon>Pterygota</taxon>
        <taxon>Neoptera</taxon>
        <taxon>Endopterygota</taxon>
        <taxon>Diptera</taxon>
        <taxon>Nematocera</taxon>
        <taxon>Culicoidea</taxon>
        <taxon>Culicidae</taxon>
        <taxon>Anophelinae</taxon>
        <taxon>Anopheles</taxon>
    </lineage>
</organism>
<sequence length="301" mass="32820">MTKKADPYGFAKDFLAGGISAAVSKTAVAPIERVKLLLQVQAASKQIAVDKQYKGIVDCFVRIPKEQGIGAFWRGNLANVIRYFPTQALNFAFKDVYKQVFLGGVDKNTQFWRYFLGNLGSGGAAGATSLCFVYPLDFARTRLGADVGRGAGEREFNGLLDCLKKTVKSDGIIGLYRGFNVSVQGIIIYRAAYFGCFDTAKGMLPDPKNTSIFVSWAIAQVVTTASGIISYPFDTVRRRMMMQSGRAKSEVMYKNTLDCWVKIGKQEGSGAFFKGAFSNVLRGTGGALVLVFYDEVKALLG</sequence>
<gene>
    <name type="ORF">AGAP006782</name>
</gene>
<keyword id="KW-0050">Antiport</keyword>
<keyword id="KW-0472">Membrane</keyword>
<keyword id="KW-0496">Mitochondrion</keyword>
<keyword id="KW-0999">Mitochondrion inner membrane</keyword>
<keyword id="KW-1185">Reference proteome</keyword>
<keyword id="KW-0677">Repeat</keyword>
<keyword id="KW-0812">Transmembrane</keyword>
<keyword id="KW-1133">Transmembrane helix</keyword>
<keyword id="KW-0813">Transport</keyword>
<evidence type="ECO:0000250" key="1">
    <source>
        <dbReference type="UniProtKB" id="G2QNH0"/>
    </source>
</evidence>
<evidence type="ECO:0000250" key="2">
    <source>
        <dbReference type="UniProtKB" id="P02722"/>
    </source>
</evidence>
<evidence type="ECO:0000250" key="3">
    <source>
        <dbReference type="UniProtKB" id="P12235"/>
    </source>
</evidence>
<evidence type="ECO:0000250" key="4">
    <source>
        <dbReference type="UniProtKB" id="P48962"/>
    </source>
</evidence>
<evidence type="ECO:0000250" key="5">
    <source>
        <dbReference type="UniProtKB" id="Q26365"/>
    </source>
</evidence>
<evidence type="ECO:0000255" key="6"/>
<evidence type="ECO:0000305" key="7"/>
<dbReference type="EMBL" id="L11617">
    <property type="protein sequence ID" value="AAB04105.1"/>
    <property type="molecule type" value="mRNA"/>
</dbReference>
<dbReference type="EMBL" id="L11618">
    <property type="protein sequence ID" value="AAB04104.1"/>
    <property type="molecule type" value="mRNA"/>
</dbReference>
<dbReference type="EMBL" id="AY227001">
    <property type="protein sequence ID" value="AAO32818.2"/>
    <property type="molecule type" value="mRNA"/>
</dbReference>
<dbReference type="EMBL" id="AAAB01008807">
    <property type="protein sequence ID" value="EAA04717.2"/>
    <property type="molecule type" value="Genomic_DNA"/>
</dbReference>
<dbReference type="PIR" id="S31935">
    <property type="entry name" value="S31935"/>
</dbReference>
<dbReference type="SMR" id="Q27238"/>
<dbReference type="STRING" id="7165.Q27238"/>
<dbReference type="PaxDb" id="7165-AGAP006782-PA"/>
<dbReference type="GeneID" id="1270282"/>
<dbReference type="KEGG" id="aga:1270282"/>
<dbReference type="VEuPathDB" id="VectorBase:AGAMI1_011265"/>
<dbReference type="VEuPathDB" id="VectorBase:AGAP006782"/>
<dbReference type="eggNOG" id="KOG0749">
    <property type="taxonomic scope" value="Eukaryota"/>
</dbReference>
<dbReference type="HOGENOM" id="CLU_015166_12_0_1"/>
<dbReference type="InParanoid" id="Q27238"/>
<dbReference type="Proteomes" id="UP000007062">
    <property type="component" value="Chromosome 2L"/>
</dbReference>
<dbReference type="GO" id="GO:0005743">
    <property type="term" value="C:mitochondrial inner membrane"/>
    <property type="evidence" value="ECO:0007669"/>
    <property type="project" value="UniProtKB-SubCell"/>
</dbReference>
<dbReference type="GO" id="GO:0005471">
    <property type="term" value="F:ATP:ADP antiporter activity"/>
    <property type="evidence" value="ECO:0007669"/>
    <property type="project" value="InterPro"/>
</dbReference>
<dbReference type="GO" id="GO:0140021">
    <property type="term" value="P:mitochondrial ADP transmembrane transport"/>
    <property type="evidence" value="ECO:0007669"/>
    <property type="project" value="InterPro"/>
</dbReference>
<dbReference type="GO" id="GO:1990544">
    <property type="term" value="P:mitochondrial ATP transmembrane transport"/>
    <property type="evidence" value="ECO:0007669"/>
    <property type="project" value="InterPro"/>
</dbReference>
<dbReference type="GO" id="GO:1901029">
    <property type="term" value="P:negative regulation of mitochondrial outer membrane permeabilization involved in apoptotic signaling pathway"/>
    <property type="evidence" value="ECO:0000318"/>
    <property type="project" value="GO_Central"/>
</dbReference>
<dbReference type="FunFam" id="1.50.40.10:FF:000002">
    <property type="entry name" value="Putative ADP/ATP translocase 2-like"/>
    <property type="match status" value="1"/>
</dbReference>
<dbReference type="Gene3D" id="1.50.40.10">
    <property type="entry name" value="Mitochondrial carrier domain"/>
    <property type="match status" value="1"/>
</dbReference>
<dbReference type="InterPro" id="IPR002113">
    <property type="entry name" value="ADT_euk_type"/>
</dbReference>
<dbReference type="InterPro" id="IPR002067">
    <property type="entry name" value="Mit_carrier"/>
</dbReference>
<dbReference type="InterPro" id="IPR018108">
    <property type="entry name" value="Mitochondrial_sb/sol_carrier"/>
</dbReference>
<dbReference type="InterPro" id="IPR023395">
    <property type="entry name" value="Mt_carrier_dom_sf"/>
</dbReference>
<dbReference type="PANTHER" id="PTHR45635">
    <property type="entry name" value="ADP,ATP CARRIER PROTEIN 1-RELATED-RELATED"/>
    <property type="match status" value="1"/>
</dbReference>
<dbReference type="PANTHER" id="PTHR45635:SF40">
    <property type="entry name" value="ADP_ATP TRANSLOCASE 4"/>
    <property type="match status" value="1"/>
</dbReference>
<dbReference type="Pfam" id="PF00153">
    <property type="entry name" value="Mito_carr"/>
    <property type="match status" value="3"/>
</dbReference>
<dbReference type="PRINTS" id="PR00927">
    <property type="entry name" value="ADPTRNSLCASE"/>
</dbReference>
<dbReference type="PRINTS" id="PR00926">
    <property type="entry name" value="MITOCARRIER"/>
</dbReference>
<dbReference type="SUPFAM" id="SSF103506">
    <property type="entry name" value="Mitochondrial carrier"/>
    <property type="match status" value="1"/>
</dbReference>
<dbReference type="PROSITE" id="PS50920">
    <property type="entry name" value="SOLCAR"/>
    <property type="match status" value="3"/>
</dbReference>